<name>VSDE_SALTY</name>
<organism>
    <name type="scientific">Salmonella typhimurium (strain LT2 / SGSC1412 / ATCC 700720)</name>
    <dbReference type="NCBI Taxonomy" id="99287"/>
    <lineage>
        <taxon>Bacteria</taxon>
        <taxon>Pseudomonadati</taxon>
        <taxon>Pseudomonadota</taxon>
        <taxon>Gammaproteobacteria</taxon>
        <taxon>Enterobacterales</taxon>
        <taxon>Enterobacteriaceae</taxon>
        <taxon>Salmonella</taxon>
    </lineage>
</organism>
<reference key="1">
    <citation type="journal article" date="1992" name="Mol. Microbiol.">
        <title>Identification, genetic analysis and DNA sequence of a 7.8-kb virulence region of the Salmonella typhimurium virulence plasmid.</title>
        <authorList>
            <person name="Gulig P.A."/>
            <person name="Caldwell A.L."/>
            <person name="Chiodo V.A."/>
        </authorList>
    </citation>
    <scope>NUCLEOTIDE SEQUENCE [GENOMIC DNA]</scope>
    <source>
        <strain>LT2 / SGSC1412 / ATCC 700720</strain>
    </source>
</reference>
<reference key="2">
    <citation type="journal article" date="2001" name="Nature">
        <title>Complete genome sequence of Salmonella enterica serovar Typhimurium LT2.</title>
        <authorList>
            <person name="McClelland M."/>
            <person name="Sanderson K.E."/>
            <person name="Spieth J."/>
            <person name="Clifton S.W."/>
            <person name="Latreille P."/>
            <person name="Courtney L."/>
            <person name="Porwollik S."/>
            <person name="Ali J."/>
            <person name="Dante M."/>
            <person name="Du F."/>
            <person name="Hou S."/>
            <person name="Layman D."/>
            <person name="Leonard S."/>
            <person name="Nguyen C."/>
            <person name="Scott K."/>
            <person name="Holmes A."/>
            <person name="Grewal N."/>
            <person name="Mulvaney E."/>
            <person name="Ryan E."/>
            <person name="Sun H."/>
            <person name="Florea L."/>
            <person name="Miller W."/>
            <person name="Stoneking T."/>
            <person name="Nhan M."/>
            <person name="Waterston R."/>
            <person name="Wilson R.K."/>
        </authorList>
    </citation>
    <scope>NUCLEOTIDE SEQUENCE [LARGE SCALE GENOMIC DNA]</scope>
    <source>
        <strain>LT2 / SGSC1412 / ATCC 700720</strain>
    </source>
</reference>
<gene>
    <name type="primary">vsdE</name>
    <name type="synonym">spvD</name>
    <name type="ordered locus">PSLT037</name>
</gene>
<protein>
    <recommendedName>
        <fullName>Virulence protein vsdE</fullName>
    </recommendedName>
</protein>
<accession>P0A2N2</accession>
<accession>P24420</accession>
<evidence type="ECO:0000305" key="1"/>
<evidence type="ECO:0007829" key="2">
    <source>
        <dbReference type="PDB" id="5LQ6"/>
    </source>
</evidence>
<evidence type="ECO:0007829" key="3">
    <source>
        <dbReference type="PDB" id="5LQ7"/>
    </source>
</evidence>
<geneLocation type="plasmid">
    <name>pSLT</name>
</geneLocation>
<sequence>MRVSGSASSQDIISRINSKNINNNDSNEVKRIKDALCIESKERILYPQNLSRDNLKQMARYVNNTYVHYSGNCVLLSACLHYNIHHRQDILSSKNTASPTVGLDSAIVDKIIFGHELNQSYCLNSIDEVEKEILNRYDIKRESSFIISAENYIAPIIGECRHDFNAVVICEYDKKPYVQFIDSWKTSNILPSLQEIKKHFSSSGEFYVRAYDEKHD</sequence>
<keyword id="KW-0002">3D-structure</keyword>
<keyword id="KW-0614">Plasmid</keyword>
<keyword id="KW-1185">Reference proteome</keyword>
<keyword id="KW-0843">Virulence</keyword>
<proteinExistence type="evidence at protein level"/>
<dbReference type="EMBL" id="Z11561">
    <property type="protein sequence ID" value="CAA77653.1"/>
    <property type="molecule type" value="Genomic_DNA"/>
</dbReference>
<dbReference type="EMBL" id="AE006471">
    <property type="protein sequence ID" value="AAL23528.1"/>
    <property type="molecule type" value="Genomic_DNA"/>
</dbReference>
<dbReference type="PIR" id="S15217">
    <property type="entry name" value="S15217"/>
</dbReference>
<dbReference type="RefSeq" id="NP_490527.1">
    <property type="nucleotide sequence ID" value="NC_003277.2"/>
</dbReference>
<dbReference type="RefSeq" id="WP_001575489.1">
    <property type="nucleotide sequence ID" value="NC_003277.2"/>
</dbReference>
<dbReference type="RefSeq" id="YP_003264390.1">
    <property type="nucleotide sequence ID" value="NC_013437.1"/>
</dbReference>
<dbReference type="RefSeq" id="YP_003864187.1">
    <property type="nucleotide sequence ID" value="NC_014476.2"/>
</dbReference>
<dbReference type="RefSeq" id="YP_006955268.1">
    <property type="nucleotide sequence ID" value="NC_019108.1"/>
</dbReference>
<dbReference type="RefSeq" id="YP_006955408.1">
    <property type="nucleotide sequence ID" value="NC_019109.1"/>
</dbReference>
<dbReference type="PDB" id="5LQ6">
    <property type="method" value="X-ray"/>
    <property type="resolution" value="1.48 A"/>
    <property type="chains" value="A=1-216"/>
</dbReference>
<dbReference type="PDB" id="5LQ7">
    <property type="method" value="X-ray"/>
    <property type="resolution" value="1.60 A"/>
    <property type="chains" value="A=1-216"/>
</dbReference>
<dbReference type="PDBsum" id="5LQ6"/>
<dbReference type="PDBsum" id="5LQ7"/>
<dbReference type="SMR" id="P0A2N2"/>
<dbReference type="GeneID" id="1256202"/>
<dbReference type="KEGG" id="stm:PSLT037"/>
<dbReference type="HOGENOM" id="CLU_086017_0_0_6"/>
<dbReference type="BioCyc" id="SENT99287:PSLT037-MONOMER"/>
<dbReference type="Proteomes" id="UP000001014">
    <property type="component" value="Plasmid pSLT"/>
</dbReference>
<dbReference type="InterPro" id="IPR008834">
    <property type="entry name" value="Sal_SpvD"/>
</dbReference>
<dbReference type="NCBIfam" id="NF011786">
    <property type="entry name" value="PRK15250.1"/>
    <property type="match status" value="1"/>
</dbReference>
<dbReference type="Pfam" id="PF05563">
    <property type="entry name" value="SpvD"/>
    <property type="match status" value="1"/>
</dbReference>
<comment type="function">
    <text>Not known. This protein is involved in the virulence of salmonellas.</text>
</comment>
<comment type="similarity">
    <text evidence="1">Belongs to the SpvD family.</text>
</comment>
<feature type="chain" id="PRO_0000221672" description="Virulence protein vsdE">
    <location>
        <begin position="1"/>
        <end position="216"/>
    </location>
</feature>
<feature type="helix" evidence="2">
    <location>
        <begin position="9"/>
        <end position="16"/>
    </location>
</feature>
<feature type="helix" evidence="2">
    <location>
        <begin position="23"/>
        <end position="25"/>
    </location>
</feature>
<feature type="helix" evidence="2">
    <location>
        <begin position="26"/>
        <end position="35"/>
    </location>
</feature>
<feature type="strand" evidence="2">
    <location>
        <begin position="36"/>
        <end position="38"/>
    </location>
</feature>
<feature type="helix" evidence="2">
    <location>
        <begin position="52"/>
        <end position="62"/>
    </location>
</feature>
<feature type="helix" evidence="2">
    <location>
        <begin position="73"/>
        <end position="86"/>
    </location>
</feature>
<feature type="strand" evidence="2">
    <location>
        <begin position="91"/>
        <end position="93"/>
    </location>
</feature>
<feature type="strand" evidence="3">
    <location>
        <begin position="99"/>
        <end position="102"/>
    </location>
</feature>
<feature type="helix" evidence="2">
    <location>
        <begin position="105"/>
        <end position="113"/>
    </location>
</feature>
<feature type="strand" evidence="3">
    <location>
        <begin position="123"/>
        <end position="125"/>
    </location>
</feature>
<feature type="helix" evidence="2">
    <location>
        <begin position="126"/>
        <end position="140"/>
    </location>
</feature>
<feature type="strand" evidence="2">
    <location>
        <begin position="144"/>
        <end position="154"/>
    </location>
</feature>
<feature type="turn" evidence="2">
    <location>
        <begin position="155"/>
        <end position="157"/>
    </location>
</feature>
<feature type="strand" evidence="2">
    <location>
        <begin position="158"/>
        <end position="169"/>
    </location>
</feature>
<feature type="strand" evidence="2">
    <location>
        <begin position="177"/>
        <end position="181"/>
    </location>
</feature>
<feature type="helix" evidence="2">
    <location>
        <begin position="193"/>
        <end position="197"/>
    </location>
</feature>
<feature type="strand" evidence="2">
    <location>
        <begin position="206"/>
        <end position="209"/>
    </location>
</feature>